<organism>
    <name type="scientific">Paraclostridium bifermentans</name>
    <name type="common">Clostridium bifermentans</name>
    <dbReference type="NCBI Taxonomy" id="1490"/>
    <lineage>
        <taxon>Bacteria</taxon>
        <taxon>Bacillati</taxon>
        <taxon>Bacillota</taxon>
        <taxon>Clostridia</taxon>
        <taxon>Peptostreptococcales</taxon>
        <taxon>Peptostreptococcaceae</taxon>
        <taxon>Paraclostridium</taxon>
    </lineage>
</organism>
<proteinExistence type="evidence at protein level"/>
<reference key="1">
    <citation type="journal article" date="1989" name="Infect. Immun.">
        <title>Cloning and expression of the phospholipase C gene from Clostridium perfringens and Clostridium bifermentans.</title>
        <authorList>
            <person name="Tso J.Y."/>
            <person name="Siebel C."/>
        </authorList>
    </citation>
    <scope>NUCLEOTIDE SEQUENCE [GENOMIC DNA]</scope>
    <scope>CHARACTERIZATION</scope>
    <source>
        <strain>ATCC 638 / DSM 14991 / JCM 1386 / NCIMB 10716 / NCTC 13019</strain>
    </source>
</reference>
<reference key="2">
    <citation type="journal article" date="1999" name="Infect. Immun.">
        <title>Differences in the carboxy-terminal (putative phospholipid binding) domains of Clostridium perfringens and Clostridium bifermentans phospholipases C influence the hemolytic and lethal properties of these enzymes.</title>
        <authorList>
            <person name="Jepson M."/>
            <person name="Howells A.M."/>
            <person name="Bullifent H.L."/>
            <person name="Bolgiano B."/>
            <person name="Crane D.T."/>
            <person name="Miller J."/>
            <person name="Holley J."/>
            <person name="Jayasekera P."/>
            <person name="Titball R.W."/>
        </authorList>
    </citation>
    <scope>NUCLEOTIDE SEQUENCE [GENOMIC DNA]</scope>
    <scope>CONSTRUCTION OF A HYBRID ENZYME</scope>
    <source>
        <strain>ATCC 638 / DSM 14991 / JCM 1386 / NCIMB 10716 / NCTC 13019</strain>
    </source>
</reference>
<reference key="3">
    <citation type="journal article" date="2003" name="Infect. Immun.">
        <title>Clostridium sordellii phospholipase C: gene cloning and comparison of enzymatic and biological activities with those of Clostridium perfringens and Clostridium bifermentans phospholipase C.</title>
        <authorList>
            <person name="Karasawa T."/>
            <person name="Wang X."/>
            <person name="Maegawa T."/>
            <person name="Michiwa Y."/>
            <person name="Kita H."/>
            <person name="Miwa K."/>
            <person name="Nakamura S."/>
        </authorList>
    </citation>
    <scope>NUCLEOTIDE SEQUENCE [GENOMIC DNA]</scope>
    <source>
        <strain>KZ 1012</strain>
    </source>
</reference>
<reference key="4">
    <citation type="journal article" date="2000" name="Microbes Infect.">
        <title>Structure and function of clostridial phospholipases C.</title>
        <authorList>
            <person name="Jepson M."/>
            <person name="Titball R.W."/>
        </authorList>
    </citation>
    <scope>REVIEW</scope>
</reference>
<dbReference type="EC" id="3.1.4.3"/>
<dbReference type="EMBL" id="AF072123">
    <property type="protein sequence ID" value="AAD41623.1"/>
    <property type="molecule type" value="Genomic_DNA"/>
</dbReference>
<dbReference type="EMBL" id="AB061869">
    <property type="protein sequence ID" value="BAB83265.1"/>
    <property type="molecule type" value="Genomic_DNA"/>
</dbReference>
<dbReference type="PIR" id="B30565">
    <property type="entry name" value="B30565"/>
</dbReference>
<dbReference type="RefSeq" id="WP_021434260.1">
    <property type="nucleotide sequence ID" value="NZ_NOLL01000007.1"/>
</dbReference>
<dbReference type="SMR" id="P20419"/>
<dbReference type="STRING" id="1490.B2H97_13000"/>
<dbReference type="eggNOG" id="ENOG5033QPJ">
    <property type="taxonomic scope" value="Bacteria"/>
</dbReference>
<dbReference type="GO" id="GO:0005576">
    <property type="term" value="C:extracellular region"/>
    <property type="evidence" value="ECO:0007669"/>
    <property type="project" value="UniProtKB-SubCell"/>
</dbReference>
<dbReference type="GO" id="GO:0034480">
    <property type="term" value="F:phosphatidylcholine phospholipase C activity"/>
    <property type="evidence" value="ECO:0007669"/>
    <property type="project" value="UniProtKB-EC"/>
</dbReference>
<dbReference type="GO" id="GO:0090729">
    <property type="term" value="F:toxin activity"/>
    <property type="evidence" value="ECO:0007669"/>
    <property type="project" value="UniProtKB-KW"/>
</dbReference>
<dbReference type="GO" id="GO:0008270">
    <property type="term" value="F:zinc ion binding"/>
    <property type="evidence" value="ECO:0007669"/>
    <property type="project" value="InterPro"/>
</dbReference>
<dbReference type="GO" id="GO:0031640">
    <property type="term" value="P:killing of cells of another organism"/>
    <property type="evidence" value="ECO:0007669"/>
    <property type="project" value="UniProtKB-KW"/>
</dbReference>
<dbReference type="CDD" id="cd11009">
    <property type="entry name" value="Zn_dep_PLPC"/>
    <property type="match status" value="1"/>
</dbReference>
<dbReference type="Gene3D" id="1.10.575.10">
    <property type="entry name" value="P1 Nuclease"/>
    <property type="match status" value="1"/>
</dbReference>
<dbReference type="Gene3D" id="2.60.60.20">
    <property type="entry name" value="PLAT/LH2 domain"/>
    <property type="match status" value="1"/>
</dbReference>
<dbReference type="InterPro" id="IPR001024">
    <property type="entry name" value="PLAT/LH2_dom"/>
</dbReference>
<dbReference type="InterPro" id="IPR036392">
    <property type="entry name" value="PLAT/LH2_dom_sf"/>
</dbReference>
<dbReference type="InterPro" id="IPR008947">
    <property type="entry name" value="PLipase_C/P1_nuclease_dom_sf"/>
</dbReference>
<dbReference type="InterPro" id="IPR029002">
    <property type="entry name" value="PLPC/GPLD1"/>
</dbReference>
<dbReference type="InterPro" id="IPR001531">
    <property type="entry name" value="Zn_PLipaseC"/>
</dbReference>
<dbReference type="Pfam" id="PF01477">
    <property type="entry name" value="PLAT"/>
    <property type="match status" value="1"/>
</dbReference>
<dbReference type="Pfam" id="PF00882">
    <property type="entry name" value="Zn_dep_PLPC"/>
    <property type="match status" value="1"/>
</dbReference>
<dbReference type="PRINTS" id="PR00479">
    <property type="entry name" value="PRPHPHLPASEC"/>
</dbReference>
<dbReference type="SMART" id="SM00770">
    <property type="entry name" value="Zn_dep_PLPC"/>
    <property type="match status" value="1"/>
</dbReference>
<dbReference type="SUPFAM" id="SSF49723">
    <property type="entry name" value="Lipase/lipooxygenase domain (PLAT/LH2 domain)"/>
    <property type="match status" value="1"/>
</dbReference>
<dbReference type="SUPFAM" id="SSF48537">
    <property type="entry name" value="Phospholipase C/P1 nuclease"/>
    <property type="match status" value="1"/>
</dbReference>
<dbReference type="PROSITE" id="PS50095">
    <property type="entry name" value="PLAT"/>
    <property type="match status" value="1"/>
</dbReference>
<dbReference type="PROSITE" id="PS00384">
    <property type="entry name" value="PROKAR_ZN_DEPEND_PLPC_1"/>
    <property type="match status" value="1"/>
</dbReference>
<dbReference type="PROSITE" id="PS51346">
    <property type="entry name" value="PROKAR_ZN_DEPEND_PLPC_2"/>
    <property type="match status" value="1"/>
</dbReference>
<accession>P20419</accession>
<accession>Q8VUZ4</accession>
<accession>Q9S532</accession>
<feature type="signal peptide" evidence="1">
    <location>
        <begin position="1"/>
        <end position="26"/>
    </location>
</feature>
<feature type="chain" id="PRO_0000023933" description="Phospholipase C">
    <location>
        <begin position="27"/>
        <end position="398"/>
    </location>
</feature>
<feature type="domain" description="Zn-dependent PLC" evidence="3">
    <location>
        <begin position="27"/>
        <end position="276"/>
    </location>
</feature>
<feature type="domain" description="PLAT" evidence="2">
    <location>
        <begin position="282"/>
        <end position="398"/>
    </location>
</feature>
<feature type="region of interest" description="Linker">
    <location>
        <begin position="273"/>
        <end position="281"/>
    </location>
</feature>
<feature type="binding site" evidence="3">
    <location>
        <position position="27"/>
    </location>
    <ligand>
        <name>Zn(2+)</name>
        <dbReference type="ChEBI" id="CHEBI:29105"/>
        <label>1</label>
    </ligand>
</feature>
<feature type="binding site" evidence="3">
    <location>
        <position position="37"/>
    </location>
    <ligand>
        <name>Zn(2+)</name>
        <dbReference type="ChEBI" id="CHEBI:29105"/>
        <label>1</label>
    </ligand>
</feature>
<feature type="binding site" evidence="3">
    <location>
        <position position="82"/>
    </location>
    <ligand>
        <name>Zn(2+)</name>
        <dbReference type="ChEBI" id="CHEBI:29105"/>
        <label>3</label>
    </ligand>
</feature>
<feature type="binding site" evidence="3">
    <location>
        <position position="94"/>
    </location>
    <ligand>
        <name>Zn(2+)</name>
        <dbReference type="ChEBI" id="CHEBI:29105"/>
        <label>3</label>
    </ligand>
</feature>
<feature type="binding site" evidence="3">
    <location>
        <position position="152"/>
    </location>
    <ligand>
        <name>Zn(2+)</name>
        <dbReference type="ChEBI" id="CHEBI:29105"/>
        <label>3</label>
    </ligand>
</feature>
<feature type="binding site" evidence="3">
    <location>
        <position position="156"/>
    </location>
    <ligand>
        <name>Zn(2+)</name>
        <dbReference type="ChEBI" id="CHEBI:29105"/>
        <label>1</label>
    </ligand>
</feature>
<feature type="binding site" evidence="3">
    <location>
        <position position="156"/>
    </location>
    <ligand>
        <name>Zn(2+)</name>
        <dbReference type="ChEBI" id="CHEBI:29105"/>
        <label>3</label>
    </ligand>
</feature>
<feature type="binding site" evidence="3">
    <location>
        <position position="162"/>
    </location>
    <ligand>
        <name>Zn(2+)</name>
        <dbReference type="ChEBI" id="CHEBI:29105"/>
        <label>2</label>
    </ligand>
</feature>
<feature type="binding site" evidence="3">
    <location>
        <position position="174"/>
    </location>
    <ligand>
        <name>Zn(2+)</name>
        <dbReference type="ChEBI" id="CHEBI:29105"/>
        <label>2</label>
    </ligand>
</feature>
<feature type="binding site" evidence="3">
    <location>
        <position position="178"/>
    </location>
    <ligand>
        <name>Zn(2+)</name>
        <dbReference type="ChEBI" id="CHEBI:29105"/>
        <label>2</label>
    </ligand>
</feature>
<feature type="binding site" evidence="1">
    <location>
        <position position="297"/>
    </location>
    <ligand>
        <name>Ca(2+)</name>
        <dbReference type="ChEBI" id="CHEBI:29108"/>
        <label>1</label>
    </ligand>
</feature>
<feature type="binding site" evidence="1">
    <location>
        <position position="298"/>
    </location>
    <ligand>
        <name>Ca(2+)</name>
        <dbReference type="ChEBI" id="CHEBI:29108"/>
        <label>3</label>
    </ligand>
</feature>
<feature type="binding site" evidence="1">
    <location>
        <position position="299"/>
    </location>
    <ligand>
        <name>Ca(2+)</name>
        <dbReference type="ChEBI" id="CHEBI:29108"/>
        <label>3</label>
    </ligand>
</feature>
<feature type="binding site" evidence="1">
    <location>
        <position position="319"/>
    </location>
    <ligand>
        <name>Ca(2+)</name>
        <dbReference type="ChEBI" id="CHEBI:29108"/>
        <label>2</label>
    </ligand>
</feature>
<feature type="binding site" evidence="1">
    <location>
        <position position="320"/>
    </location>
    <ligand>
        <name>Ca(2+)</name>
        <dbReference type="ChEBI" id="CHEBI:29108"/>
        <label>2</label>
    </ligand>
</feature>
<feature type="binding site" evidence="1">
    <location>
        <position position="322"/>
    </location>
    <ligand>
        <name>Ca(2+)</name>
        <dbReference type="ChEBI" id="CHEBI:29108"/>
        <label>2</label>
    </ligand>
</feature>
<feature type="binding site" evidence="1">
    <location>
        <position position="323"/>
    </location>
    <ligand>
        <name>Ca(2+)</name>
        <dbReference type="ChEBI" id="CHEBI:29108"/>
        <label>3</label>
    </ligand>
</feature>
<feature type="binding site" evidence="1">
    <location>
        <position position="324"/>
    </location>
    <ligand>
        <name>Ca(2+)</name>
        <dbReference type="ChEBI" id="CHEBI:29108"/>
        <label>2</label>
    </ligand>
</feature>
<feature type="binding site" evidence="1">
    <location>
        <position position="324"/>
    </location>
    <ligand>
        <name>Ca(2+)</name>
        <dbReference type="ChEBI" id="CHEBI:29108"/>
        <label>3</label>
    </ligand>
</feature>
<feature type="binding site" evidence="1">
    <location>
        <position position="363"/>
    </location>
    <ligand>
        <name>Ca(2+)</name>
        <dbReference type="ChEBI" id="CHEBI:29108"/>
        <label>1</label>
    </ligand>
</feature>
<feature type="sequence conflict" description="In Ref. 2 and 3." evidence="4" ref="2 3">
    <original>SRNS</original>
    <variation>AETQ</variation>
    <location>
        <begin position="120"/>
        <end position="123"/>
    </location>
</feature>
<feature type="sequence conflict" description="In Ref. 3; BAB83265." evidence="4" ref="3">
    <original>GNT</original>
    <variation>ENI</variation>
    <location>
        <begin position="272"/>
        <end position="274"/>
    </location>
</feature>
<feature type="sequence conflict" description="In Ref. 3; BAB83265." evidence="4" ref="3">
    <original>L</original>
    <variation>S</variation>
    <location>
        <position position="280"/>
    </location>
</feature>
<feature type="sequence conflict" description="In Ref. 3; BAB83265." evidence="4" ref="3">
    <original>G</original>
    <variation>D</variation>
    <location>
        <position position="311"/>
    </location>
</feature>
<feature type="sequence conflict" description="In Ref. 3; BAB83265." evidence="4" ref="3">
    <original>R</original>
    <variation>K</variation>
    <location>
        <position position="357"/>
    </location>
</feature>
<keyword id="KW-0106">Calcium</keyword>
<keyword id="KW-0204">Cytolysis</keyword>
<keyword id="KW-0354">Hemolysis</keyword>
<keyword id="KW-0378">Hydrolase</keyword>
<keyword id="KW-0479">Metal-binding</keyword>
<keyword id="KW-0964">Secreted</keyword>
<keyword id="KW-0732">Signal</keyword>
<keyword id="KW-0800">Toxin</keyword>
<keyword id="KW-0843">Virulence</keyword>
<keyword id="KW-0862">Zinc</keyword>
<gene>
    <name type="primary">plc</name>
    <name type="synonym">cbp</name>
</gene>
<comment type="function">
    <text>Bacterial hemolysins are exotoxins that attack blood cell membranes and cause cell rupture. Binds to eukaryotic membranes where it hydrolyzes phosphatidylcholine. This enzyme has 10-fold less activity towards sphingomyelin than its C.perfringens counterpart, is approximately 100-fold less hemolytic against mouse erythrocytes and at least 100-fold less toxic in mice.</text>
</comment>
<comment type="catalytic activity">
    <reaction>
        <text>a 1,2-diacyl-sn-glycero-3-phosphocholine + H2O = phosphocholine + a 1,2-diacyl-sn-glycerol + H(+)</text>
        <dbReference type="Rhea" id="RHEA:10604"/>
        <dbReference type="ChEBI" id="CHEBI:15377"/>
        <dbReference type="ChEBI" id="CHEBI:15378"/>
        <dbReference type="ChEBI" id="CHEBI:17815"/>
        <dbReference type="ChEBI" id="CHEBI:57643"/>
        <dbReference type="ChEBI" id="CHEBI:295975"/>
        <dbReference type="EC" id="3.1.4.3"/>
    </reaction>
</comment>
<comment type="cofactor">
    <cofactor evidence="1">
        <name>Ca(2+)</name>
        <dbReference type="ChEBI" id="CHEBI:29108"/>
    </cofactor>
    <text evidence="1">Binds 3 Ca(2+) ions per subunit.</text>
</comment>
<comment type="cofactor">
    <cofactor evidence="3">
        <name>Zn(2+)</name>
        <dbReference type="ChEBI" id="CHEBI:29105"/>
    </cofactor>
    <text evidence="3">Binds 3 Zn(2+) ions per subunit.</text>
</comment>
<comment type="subcellular location">
    <subcellularLocation>
        <location evidence="3">Secreted</location>
    </subcellularLocation>
</comment>
<comment type="domain">
    <text evidence="1">The protein is composed of 2 domains; the N-terminal domain contains the phospholipase C active site (PLC), in a cleft which is also occupied by the 3 zinc ions. The C-terminal domain is a putative phospholipid-recognition domain, which shows structural homology with phospholipid-binding C2-like domains from a range of eukaryotic proteins. The ability to bind membrane phospholipids in a Ca(2+) dependent manner is conferred by this C-terminal domain (By similarity).</text>
</comment>
<comment type="miscellaneous">
    <text>A hybrid protein between the N-terminus of C.bifermentans and the C-terminus of C.perfringens has an activity intermediate between the two.</text>
</comment>
<comment type="similarity">
    <text evidence="3">Belongs to the bacterial zinc-metallophospholipase C family.</text>
</comment>
<name>PHLC_PARBF</name>
<protein>
    <recommendedName>
        <fullName>Phospholipase C</fullName>
        <shortName>PLC</shortName>
        <ecNumber>3.1.4.3</ecNumber>
    </recommendedName>
    <alternativeName>
        <fullName>Cbp</fullName>
    </alternativeName>
    <alternativeName>
        <fullName>Phosphatidylcholine cholinephosphohydrolase</fullName>
    </alternativeName>
</protein>
<evidence type="ECO:0000250" key="1"/>
<evidence type="ECO:0000255" key="2">
    <source>
        <dbReference type="PROSITE-ProRule" id="PRU00152"/>
    </source>
</evidence>
<evidence type="ECO:0000255" key="3">
    <source>
        <dbReference type="PROSITE-ProRule" id="PRU00678"/>
    </source>
</evidence>
<evidence type="ECO:0000305" key="4"/>
<sequence length="398" mass="45366">MKALKKVSNILCVLGLCTLMGGTSYAWDGKKDGTGTHSLIAEHGLSMLNNDLSGNESQQVKDNIKILNEYLGDLKLGSTYPDYDPNAYDLYQDHFYDPDTGNNFTIDNSWYASYPIYDTSRNSVRKFATLAKNEWEKGNFKEATFLLGQGLHYLGDLNTPYHASNVTAVDSPGHVKYETFVEERKDNYALNTSGNDTTSGVYKEAMENPSFNKWMTQNSIKYAKIAKDLYYSHSTMSHSWDDWDYSGREAIKNSQVCTAGFLYRFMNEVSNGNTGDNDSLTNEFNIVLKTADNKYAGTDDNVYFGFETNEGKKFEWKLDNAGNDFERNQVDNYILKTKDGEEVDINNISNYWIRKERLTSISDDWELSNFKLIANGKVIQQQDVNKVFTGNETYYINK</sequence>